<protein>
    <recommendedName>
        <fullName>Calcium-transporting ATPase 4, plasma membrane-type</fullName>
        <ecNumber>7.2.2.10</ecNumber>
    </recommendedName>
    <alternativeName>
        <fullName>Ca(2+)-ATPase isoform 4</fullName>
    </alternativeName>
</protein>
<feature type="chain" id="PRO_0000046412" description="Calcium-transporting ATPase 4, plasma membrane-type">
    <location>
        <begin position="1"/>
        <end position="1030"/>
    </location>
</feature>
<feature type="topological domain" description="Cytoplasmic" evidence="2">
    <location>
        <begin position="1"/>
        <end position="157"/>
    </location>
</feature>
<feature type="transmembrane region" description="Helical" evidence="2">
    <location>
        <begin position="158"/>
        <end position="178"/>
    </location>
</feature>
<feature type="topological domain" description="Lumenal" evidence="2">
    <location>
        <begin position="179"/>
        <end position="196"/>
    </location>
</feature>
<feature type="transmembrane region" description="Helical" evidence="2">
    <location>
        <begin position="197"/>
        <end position="217"/>
    </location>
</feature>
<feature type="topological domain" description="Cytoplasmic" evidence="2">
    <location>
        <begin position="218"/>
        <end position="345"/>
    </location>
</feature>
<feature type="transmembrane region" description="Helical" evidence="2">
    <location>
        <begin position="346"/>
        <end position="365"/>
    </location>
</feature>
<feature type="topological domain" description="Lumenal" evidence="2">
    <location>
        <begin position="366"/>
        <end position="395"/>
    </location>
</feature>
<feature type="transmembrane region" description="Helical" evidence="2">
    <location>
        <begin position="396"/>
        <end position="413"/>
    </location>
</feature>
<feature type="topological domain" description="Cytoplasmic" evidence="2">
    <location>
        <begin position="414"/>
        <end position="804"/>
    </location>
</feature>
<feature type="transmembrane region" description="Helical" evidence="2">
    <location>
        <begin position="805"/>
        <end position="823"/>
    </location>
</feature>
<feature type="topological domain" description="Lumenal" evidence="2">
    <location>
        <begin position="824"/>
        <end position="834"/>
    </location>
</feature>
<feature type="transmembrane region" description="Helical" evidence="2">
    <location>
        <begin position="835"/>
        <end position="855"/>
    </location>
</feature>
<feature type="topological domain" description="Cytoplasmic" evidence="2">
    <location>
        <begin position="856"/>
        <end position="875"/>
    </location>
</feature>
<feature type="transmembrane region" description="Helical" evidence="2">
    <location>
        <begin position="876"/>
        <end position="898"/>
    </location>
</feature>
<feature type="topological domain" description="Lumenal" evidence="2">
    <location>
        <begin position="899"/>
        <end position="910"/>
    </location>
</feature>
<feature type="transmembrane region" description="Helical" evidence="2">
    <location>
        <begin position="911"/>
        <end position="932"/>
    </location>
</feature>
<feature type="topological domain" description="Cytoplasmic" evidence="2">
    <location>
        <begin position="933"/>
        <end position="950"/>
    </location>
</feature>
<feature type="transmembrane region" description="Helical" evidence="2">
    <location>
        <begin position="951"/>
        <end position="972"/>
    </location>
</feature>
<feature type="topological domain" description="Lumenal" evidence="2">
    <location>
        <begin position="973"/>
        <end position="982"/>
    </location>
</feature>
<feature type="transmembrane region" description="Helical" evidence="2">
    <location>
        <begin position="983"/>
        <end position="1004"/>
    </location>
</feature>
<feature type="topological domain" description="Cytoplasmic" evidence="2">
    <location>
        <begin position="1005"/>
        <end position="1030"/>
    </location>
</feature>
<feature type="region of interest" description="Interaction with calmodulin">
    <location>
        <begin position="19"/>
        <end position="30"/>
    </location>
</feature>
<feature type="active site" description="4-aspartylphosphate intermediate" evidence="1">
    <location>
        <position position="451"/>
    </location>
</feature>
<feature type="binding site" evidence="1">
    <location>
        <position position="749"/>
    </location>
    <ligand>
        <name>Mg(2+)</name>
        <dbReference type="ChEBI" id="CHEBI:18420"/>
    </ligand>
</feature>
<feature type="binding site" evidence="1">
    <location>
        <position position="753"/>
    </location>
    <ligand>
        <name>Mg(2+)</name>
        <dbReference type="ChEBI" id="CHEBI:18420"/>
    </ligand>
</feature>
<feature type="modified residue" description="Phosphoserine" evidence="6">
    <location>
        <position position="28"/>
    </location>
</feature>
<evidence type="ECO:0000250" key="1"/>
<evidence type="ECO:0000255" key="2"/>
<evidence type="ECO:0000269" key="3">
    <source>
    </source>
</evidence>
<evidence type="ECO:0000269" key="4">
    <source>
    </source>
</evidence>
<evidence type="ECO:0000305" key="5"/>
<evidence type="ECO:0007744" key="6">
    <source>
    </source>
</evidence>
<keyword id="KW-0067">ATP-binding</keyword>
<keyword id="KW-0106">Calcium</keyword>
<keyword id="KW-0109">Calcium transport</keyword>
<keyword id="KW-0112">Calmodulin-binding</keyword>
<keyword id="KW-0406">Ion transport</keyword>
<keyword id="KW-0460">Magnesium</keyword>
<keyword id="KW-0472">Membrane</keyword>
<keyword id="KW-0479">Metal-binding</keyword>
<keyword id="KW-0547">Nucleotide-binding</keyword>
<keyword id="KW-0597">Phosphoprotein</keyword>
<keyword id="KW-1185">Reference proteome</keyword>
<keyword id="KW-1278">Translocase</keyword>
<keyword id="KW-0812">Transmembrane</keyword>
<keyword id="KW-1133">Transmembrane helix</keyword>
<keyword id="KW-0813">Transport</keyword>
<keyword id="KW-0926">Vacuole</keyword>
<sequence>MSNLLRDFEVEAKNPSLEARQRWRSSVSIVKNRTRRFRNIRDLDKLADYENKKHQIQEKIRVAFFVQKAALHFIDAAARPEYKLTDEVKKAGFSIEADELASMVRKNDTKSLAQKGGVEELAKKVSVSLSEGIRSSEVPIREKIFGENRYTEKPARSFLMFVWEALHDITLIILMVCAVVSIGVGVATEGFPRGMYDGTGILLSILLVVMVTAISDYKQSLQFRDLDREKKKIIVQVTRDGSRQEISIHDLVVGDVVHLSIGDQVPADGIFISGYNLEIDESSLSGESEPSHVNKEKPFLLSGTKVQNGSAKMLVTTVGMRTEWGKLMETLVDGGEDETPLQVKLNGVATIIGKIGLSFAVLTFVVLCIRFVLDKATSGSFTNWSSEDALTLLDYFAISVTIIVVAVPEGLPLAVTLSLAFAMKKLMSDRALVRHLAACETMGSSTCICTDKTGTLTTNHMVVNKVWICDKVQERQEGSKESFELELSEEVQSTLLQGIFQNTGSEVVKDKDGNTQILGSPTERAILEFGLLLGGDFNTQRKEHKILKIEPFNSDKKKMSVLIALPGGGARAFCKGASEIVLKMCENVVDSNGESVPLTEERITSISDIIEGFASEALRTLCLVYKDLDEAPSGELPDGGYTMVAVVGIKDPVRPGVREAVQTCQAAGITVRMVTGDNISTAKAIAKECGIYTEGGLAIEGSEFRDLSPHEMRAIIPKIQVMARSLPLDKHTLVSNLRKIGEVVAVTGDGTNDAPALHEADIGLAMGIAGTEVAKENADVIIMDDNFKTIVNVARWGRAVYINIQKFVQFQLTVNVVALIINFVSACITGSAPLTAVQLLWVNMIMDTLGALALATEPPNEGLMKRAPIARTASFITKTMWRNIAGQSVYQLIVLGILNFAGKSLLKLDGPDSTAVLNTVIFNSFVFCQVFNEINSREIEKINVFKGMFNSWVFTWVMTVTVVFQVIIVEFLGAFASTVPLSWQHWLLSILIGSLNMIVAVILKCVPVESRHHHDGYDLLPSGPSSSNSA</sequence>
<reference key="1">
    <citation type="journal article" date="2000" name="Plant Physiol.">
        <title>The ACA4 gene of Arabidopsis encodes a vacuolar membrane calcium pump that improves salt tolerance in yeast.</title>
        <authorList>
            <person name="Geisler M."/>
            <person name="Frangne N."/>
            <person name="Gomes E."/>
            <person name="Martinoia E."/>
            <person name="Palmgren M.G."/>
        </authorList>
    </citation>
    <scope>NUCLEOTIDE SEQUENCE [MRNA]</scope>
    <scope>SUBCELLULAR LOCATION</scope>
    <source>
        <strain>cv. Columbia</strain>
    </source>
</reference>
<reference key="2">
    <citation type="journal article" date="2001" name="Plant Physiol.">
        <authorList>
            <person name="Geisler M."/>
            <person name="Frangne N."/>
            <person name="Gomes E."/>
            <person name="Martinoia E."/>
            <person name="Palmgren M.G."/>
        </authorList>
    </citation>
    <scope>ERRATUM OF PUBMED:11115896</scope>
</reference>
<reference key="3">
    <citation type="journal article" date="1999" name="Nature">
        <title>Sequence and analysis of chromosome 2 of the plant Arabidopsis thaliana.</title>
        <authorList>
            <person name="Lin X."/>
            <person name="Kaul S."/>
            <person name="Rounsley S.D."/>
            <person name="Shea T.P."/>
            <person name="Benito M.-I."/>
            <person name="Town C.D."/>
            <person name="Fujii C.Y."/>
            <person name="Mason T.M."/>
            <person name="Bowman C.L."/>
            <person name="Barnstead M.E."/>
            <person name="Feldblyum T.V."/>
            <person name="Buell C.R."/>
            <person name="Ketchum K.A."/>
            <person name="Lee J.J."/>
            <person name="Ronning C.M."/>
            <person name="Koo H.L."/>
            <person name="Moffat K.S."/>
            <person name="Cronin L.A."/>
            <person name="Shen M."/>
            <person name="Pai G."/>
            <person name="Van Aken S."/>
            <person name="Umayam L."/>
            <person name="Tallon L.J."/>
            <person name="Gill J.E."/>
            <person name="Adams M.D."/>
            <person name="Carrera A.J."/>
            <person name="Creasy T.H."/>
            <person name="Goodman H.M."/>
            <person name="Somerville C.R."/>
            <person name="Copenhaver G.P."/>
            <person name="Preuss D."/>
            <person name="Nierman W.C."/>
            <person name="White O."/>
            <person name="Eisen J.A."/>
            <person name="Salzberg S.L."/>
            <person name="Fraser C.M."/>
            <person name="Venter J.C."/>
        </authorList>
    </citation>
    <scope>NUCLEOTIDE SEQUENCE [LARGE SCALE GENOMIC DNA]</scope>
    <source>
        <strain>cv. Columbia</strain>
    </source>
</reference>
<reference key="4">
    <citation type="journal article" date="2017" name="Plant J.">
        <title>Araport11: a complete reannotation of the Arabidopsis thaliana reference genome.</title>
        <authorList>
            <person name="Cheng C.Y."/>
            <person name="Krishnakumar V."/>
            <person name="Chan A.P."/>
            <person name="Thibaud-Nissen F."/>
            <person name="Schobel S."/>
            <person name="Town C.D."/>
        </authorList>
    </citation>
    <scope>GENOME REANNOTATION</scope>
    <source>
        <strain>cv. Columbia</strain>
    </source>
</reference>
<reference key="5">
    <citation type="journal article" date="2007" name="Mol. Cell. Proteomics">
        <title>A proteomics dissection of Arabidopsis thaliana vacuoles isolated from cell culture.</title>
        <authorList>
            <person name="Jaquinod M."/>
            <person name="Villiers F."/>
            <person name="Kieffer-Jaquinod S."/>
            <person name="Hugouvieux V."/>
            <person name="Bruley C."/>
            <person name="Garin J."/>
            <person name="Bourguignon J."/>
        </authorList>
    </citation>
    <scope>IDENTIFICATION BY MASS SPECTROMETRY</scope>
    <scope>SUBCELLULAR LOCATION [LARGE SCALE ANALYSIS]</scope>
</reference>
<reference key="6">
    <citation type="journal article" date="2009" name="Plant Physiol.">
        <title>Large-scale Arabidopsis phosphoproteome profiling reveals novel chloroplast kinase substrates and phosphorylation networks.</title>
        <authorList>
            <person name="Reiland S."/>
            <person name="Messerli G."/>
            <person name="Baerenfaller K."/>
            <person name="Gerrits B."/>
            <person name="Endler A."/>
            <person name="Grossmann J."/>
            <person name="Gruissem W."/>
            <person name="Baginsky S."/>
        </authorList>
    </citation>
    <scope>PHOSPHORYLATION [LARGE SCALE ANALYSIS] AT SER-28</scope>
    <scope>IDENTIFICATION BY MASS SPECTROMETRY [LARGE SCALE ANALYSIS]</scope>
</reference>
<gene>
    <name type="primary">ACA4</name>
    <name type="ordered locus">At2g41560</name>
    <name type="ORF">T32G6.8</name>
</gene>
<comment type="function">
    <text>This magnesium-dependent enzyme catalyzes the hydrolysis of ATP coupled with the translocation of calcium from the cytosol into small vacuoles.</text>
</comment>
<comment type="catalytic activity">
    <reaction>
        <text>Ca(2+)(in) + ATP + H2O = Ca(2+)(out) + ADP + phosphate + H(+)</text>
        <dbReference type="Rhea" id="RHEA:18105"/>
        <dbReference type="ChEBI" id="CHEBI:15377"/>
        <dbReference type="ChEBI" id="CHEBI:15378"/>
        <dbReference type="ChEBI" id="CHEBI:29108"/>
        <dbReference type="ChEBI" id="CHEBI:30616"/>
        <dbReference type="ChEBI" id="CHEBI:43474"/>
        <dbReference type="ChEBI" id="CHEBI:456216"/>
        <dbReference type="EC" id="7.2.2.10"/>
    </reaction>
</comment>
<comment type="activity regulation">
    <text>Activated by calmodulin.</text>
</comment>
<comment type="subcellular location">
    <subcellularLocation>
        <location evidence="3 4">Vacuole membrane</location>
        <topology evidence="2">Multi-pass membrane protein</topology>
    </subcellularLocation>
    <text evidence="3">Tonoplast. Small vacuoles.</text>
</comment>
<comment type="domain">
    <text>The N-terminus contains an autoinhibitory calmodulin-binding domain, which binds calmodulin in a calcium-dependent fashion.</text>
</comment>
<comment type="similarity">
    <text evidence="5">Belongs to the cation transport ATPase (P-type) (TC 3.A.3) family. Type IIB subfamily.</text>
</comment>
<name>ACA4_ARATH</name>
<proteinExistence type="evidence at protein level"/>
<accession>O22218</accession>
<dbReference type="EC" id="7.2.2.10"/>
<dbReference type="EMBL" id="AF200739">
    <property type="protein sequence ID" value="AAG35585.1"/>
    <property type="molecule type" value="mRNA"/>
</dbReference>
<dbReference type="EMBL" id="AC002510">
    <property type="protein sequence ID" value="AAB84338.1"/>
    <property type="molecule type" value="Genomic_DNA"/>
</dbReference>
<dbReference type="EMBL" id="CP002685">
    <property type="protein sequence ID" value="AEC10000.1"/>
    <property type="molecule type" value="Genomic_DNA"/>
</dbReference>
<dbReference type="PIR" id="T00812">
    <property type="entry name" value="T00812"/>
</dbReference>
<dbReference type="RefSeq" id="NP_181687.1">
    <property type="nucleotide sequence ID" value="NM_129719.4"/>
</dbReference>
<dbReference type="SMR" id="O22218"/>
<dbReference type="BioGRID" id="4091">
    <property type="interactions" value="1"/>
</dbReference>
<dbReference type="FunCoup" id="O22218">
    <property type="interactions" value="2429"/>
</dbReference>
<dbReference type="STRING" id="3702.O22218"/>
<dbReference type="iPTMnet" id="O22218"/>
<dbReference type="PaxDb" id="3702-AT2G41560.1"/>
<dbReference type="ProteomicsDB" id="244534"/>
<dbReference type="EnsemblPlants" id="AT2G41560.1">
    <property type="protein sequence ID" value="AT2G41560.1"/>
    <property type="gene ID" value="AT2G41560"/>
</dbReference>
<dbReference type="GeneID" id="818754"/>
<dbReference type="Gramene" id="AT2G41560.1">
    <property type="protein sequence ID" value="AT2G41560.1"/>
    <property type="gene ID" value="AT2G41560"/>
</dbReference>
<dbReference type="KEGG" id="ath:AT2G41560"/>
<dbReference type="Araport" id="AT2G41560"/>
<dbReference type="TAIR" id="AT2G41560">
    <property type="gene designation" value="ACA4"/>
</dbReference>
<dbReference type="eggNOG" id="KOG0204">
    <property type="taxonomic scope" value="Eukaryota"/>
</dbReference>
<dbReference type="HOGENOM" id="CLU_002360_9_0_1"/>
<dbReference type="InParanoid" id="O22218"/>
<dbReference type="PhylomeDB" id="O22218"/>
<dbReference type="BioCyc" id="ARA:AT2G41560-MONOMER"/>
<dbReference type="PRO" id="PR:O22218"/>
<dbReference type="Proteomes" id="UP000006548">
    <property type="component" value="Chromosome 2"/>
</dbReference>
<dbReference type="ExpressionAtlas" id="O22218">
    <property type="expression patterns" value="baseline and differential"/>
</dbReference>
<dbReference type="GO" id="GO:0009507">
    <property type="term" value="C:chloroplast"/>
    <property type="evidence" value="ECO:0007005"/>
    <property type="project" value="TAIR"/>
</dbReference>
<dbReference type="GO" id="GO:0005829">
    <property type="term" value="C:cytosol"/>
    <property type="evidence" value="ECO:0007005"/>
    <property type="project" value="TAIR"/>
</dbReference>
<dbReference type="GO" id="GO:0000325">
    <property type="term" value="C:plant-type vacuole"/>
    <property type="evidence" value="ECO:0000314"/>
    <property type="project" value="TAIR"/>
</dbReference>
<dbReference type="GO" id="GO:0009705">
    <property type="term" value="C:plant-type vacuole membrane"/>
    <property type="evidence" value="ECO:0000314"/>
    <property type="project" value="TAIR"/>
</dbReference>
<dbReference type="GO" id="GO:0005774">
    <property type="term" value="C:vacuolar membrane"/>
    <property type="evidence" value="ECO:0007005"/>
    <property type="project" value="TAIR"/>
</dbReference>
<dbReference type="GO" id="GO:0005773">
    <property type="term" value="C:vacuole"/>
    <property type="evidence" value="ECO:0007005"/>
    <property type="project" value="TAIR"/>
</dbReference>
<dbReference type="GO" id="GO:0005524">
    <property type="term" value="F:ATP binding"/>
    <property type="evidence" value="ECO:0007669"/>
    <property type="project" value="UniProtKB-KW"/>
</dbReference>
<dbReference type="GO" id="GO:0016887">
    <property type="term" value="F:ATP hydrolysis activity"/>
    <property type="evidence" value="ECO:0007669"/>
    <property type="project" value="InterPro"/>
</dbReference>
<dbReference type="GO" id="GO:0005516">
    <property type="term" value="F:calmodulin binding"/>
    <property type="evidence" value="ECO:0000314"/>
    <property type="project" value="TAIR"/>
</dbReference>
<dbReference type="GO" id="GO:0046872">
    <property type="term" value="F:metal ion binding"/>
    <property type="evidence" value="ECO:0007669"/>
    <property type="project" value="UniProtKB-KW"/>
</dbReference>
<dbReference type="GO" id="GO:0005388">
    <property type="term" value="F:P-type calcium transporter activity"/>
    <property type="evidence" value="ECO:0000250"/>
    <property type="project" value="TAIR"/>
</dbReference>
<dbReference type="GO" id="GO:0042742">
    <property type="term" value="P:defense response to bacterium"/>
    <property type="evidence" value="ECO:0000316"/>
    <property type="project" value="TAIR"/>
</dbReference>
<dbReference type="GO" id="GO:0055081">
    <property type="term" value="P:monoatomic anion homeostasis"/>
    <property type="evidence" value="ECO:0000315"/>
    <property type="project" value="TAIR"/>
</dbReference>
<dbReference type="GO" id="GO:0043069">
    <property type="term" value="P:negative regulation of programmed cell death"/>
    <property type="evidence" value="ECO:0000316"/>
    <property type="project" value="TAIR"/>
</dbReference>
<dbReference type="GO" id="GO:0009624">
    <property type="term" value="P:response to nematode"/>
    <property type="evidence" value="ECO:0007007"/>
    <property type="project" value="TAIR"/>
</dbReference>
<dbReference type="CDD" id="cd02081">
    <property type="entry name" value="P-type_ATPase_Ca_PMCA-like"/>
    <property type="match status" value="1"/>
</dbReference>
<dbReference type="FunFam" id="1.20.1110.10:FF:000039">
    <property type="entry name" value="Calcium-transporting ATPase"/>
    <property type="match status" value="1"/>
</dbReference>
<dbReference type="FunFam" id="1.20.5.170:FF:000026">
    <property type="entry name" value="Calcium-transporting ATPase"/>
    <property type="match status" value="1"/>
</dbReference>
<dbReference type="FunFam" id="2.70.150.10:FF:000006">
    <property type="entry name" value="Calcium-transporting ATPase"/>
    <property type="match status" value="1"/>
</dbReference>
<dbReference type="FunFam" id="3.40.1110.10:FF:000011">
    <property type="entry name" value="Calcium-transporting ATPase"/>
    <property type="match status" value="1"/>
</dbReference>
<dbReference type="FunFam" id="3.40.50.1000:FF:000011">
    <property type="entry name" value="Calcium-transporting ATPase"/>
    <property type="match status" value="1"/>
</dbReference>
<dbReference type="Gene3D" id="1.20.5.170">
    <property type="match status" value="1"/>
</dbReference>
<dbReference type="Gene3D" id="3.40.1110.10">
    <property type="entry name" value="Calcium-transporting ATPase, cytoplasmic domain N"/>
    <property type="match status" value="1"/>
</dbReference>
<dbReference type="Gene3D" id="2.70.150.10">
    <property type="entry name" value="Calcium-transporting ATPase, cytoplasmic transduction domain A"/>
    <property type="match status" value="1"/>
</dbReference>
<dbReference type="Gene3D" id="1.20.1110.10">
    <property type="entry name" value="Calcium-transporting ATPase, transmembrane domain"/>
    <property type="match status" value="1"/>
</dbReference>
<dbReference type="Gene3D" id="3.40.50.1000">
    <property type="entry name" value="HAD superfamily/HAD-like"/>
    <property type="match status" value="1"/>
</dbReference>
<dbReference type="InterPro" id="IPR006068">
    <property type="entry name" value="ATPase_P-typ_cation-transptr_C"/>
</dbReference>
<dbReference type="InterPro" id="IPR004014">
    <property type="entry name" value="ATPase_P-typ_cation-transptr_N"/>
</dbReference>
<dbReference type="InterPro" id="IPR023299">
    <property type="entry name" value="ATPase_P-typ_cyto_dom_N"/>
</dbReference>
<dbReference type="InterPro" id="IPR018303">
    <property type="entry name" value="ATPase_P-typ_P_site"/>
</dbReference>
<dbReference type="InterPro" id="IPR023298">
    <property type="entry name" value="ATPase_P-typ_TM_dom_sf"/>
</dbReference>
<dbReference type="InterPro" id="IPR008250">
    <property type="entry name" value="ATPase_P-typ_transduc_dom_A_sf"/>
</dbReference>
<dbReference type="InterPro" id="IPR024750">
    <property type="entry name" value="Ca_ATPase_N_dom"/>
</dbReference>
<dbReference type="InterPro" id="IPR036412">
    <property type="entry name" value="HAD-like_sf"/>
</dbReference>
<dbReference type="InterPro" id="IPR023214">
    <property type="entry name" value="HAD_sf"/>
</dbReference>
<dbReference type="InterPro" id="IPR006408">
    <property type="entry name" value="P-type_ATPase_IIB"/>
</dbReference>
<dbReference type="InterPro" id="IPR001757">
    <property type="entry name" value="P_typ_ATPase"/>
</dbReference>
<dbReference type="InterPro" id="IPR044492">
    <property type="entry name" value="P_typ_ATPase_HD_dom"/>
</dbReference>
<dbReference type="NCBIfam" id="TIGR01517">
    <property type="entry name" value="ATPase-IIB_Ca"/>
    <property type="match status" value="1"/>
</dbReference>
<dbReference type="NCBIfam" id="TIGR01494">
    <property type="entry name" value="ATPase_P-type"/>
    <property type="match status" value="3"/>
</dbReference>
<dbReference type="PANTHER" id="PTHR24093:SF438">
    <property type="entry name" value="CALCIUM-TRANSPORTING ATPASE 4, PLASMA MEMBRANE-TYPE"/>
    <property type="match status" value="1"/>
</dbReference>
<dbReference type="PANTHER" id="PTHR24093">
    <property type="entry name" value="CATION TRANSPORTING ATPASE"/>
    <property type="match status" value="1"/>
</dbReference>
<dbReference type="Pfam" id="PF12515">
    <property type="entry name" value="CaATP_NAI"/>
    <property type="match status" value="1"/>
</dbReference>
<dbReference type="Pfam" id="PF13246">
    <property type="entry name" value="Cation_ATPase"/>
    <property type="match status" value="1"/>
</dbReference>
<dbReference type="Pfam" id="PF00689">
    <property type="entry name" value="Cation_ATPase_C"/>
    <property type="match status" value="1"/>
</dbReference>
<dbReference type="Pfam" id="PF00690">
    <property type="entry name" value="Cation_ATPase_N"/>
    <property type="match status" value="1"/>
</dbReference>
<dbReference type="Pfam" id="PF00122">
    <property type="entry name" value="E1-E2_ATPase"/>
    <property type="match status" value="1"/>
</dbReference>
<dbReference type="Pfam" id="PF00702">
    <property type="entry name" value="Hydrolase"/>
    <property type="match status" value="1"/>
</dbReference>
<dbReference type="PRINTS" id="PR00119">
    <property type="entry name" value="CATATPASE"/>
</dbReference>
<dbReference type="PRINTS" id="PR00120">
    <property type="entry name" value="HATPASE"/>
</dbReference>
<dbReference type="SFLD" id="SFLDS00003">
    <property type="entry name" value="Haloacid_Dehalogenase"/>
    <property type="match status" value="1"/>
</dbReference>
<dbReference type="SFLD" id="SFLDF00027">
    <property type="entry name" value="p-type_atpase"/>
    <property type="match status" value="1"/>
</dbReference>
<dbReference type="SMART" id="SM00831">
    <property type="entry name" value="Cation_ATPase_N"/>
    <property type="match status" value="1"/>
</dbReference>
<dbReference type="SUPFAM" id="SSF81653">
    <property type="entry name" value="Calcium ATPase, transduction domain A"/>
    <property type="match status" value="1"/>
</dbReference>
<dbReference type="SUPFAM" id="SSF81665">
    <property type="entry name" value="Calcium ATPase, transmembrane domain M"/>
    <property type="match status" value="1"/>
</dbReference>
<dbReference type="SUPFAM" id="SSF56784">
    <property type="entry name" value="HAD-like"/>
    <property type="match status" value="1"/>
</dbReference>
<dbReference type="SUPFAM" id="SSF81660">
    <property type="entry name" value="Metal cation-transporting ATPase, ATP-binding domain N"/>
    <property type="match status" value="1"/>
</dbReference>
<dbReference type="PROSITE" id="PS00154">
    <property type="entry name" value="ATPASE_E1_E2"/>
    <property type="match status" value="1"/>
</dbReference>
<organism>
    <name type="scientific">Arabidopsis thaliana</name>
    <name type="common">Mouse-ear cress</name>
    <dbReference type="NCBI Taxonomy" id="3702"/>
    <lineage>
        <taxon>Eukaryota</taxon>
        <taxon>Viridiplantae</taxon>
        <taxon>Streptophyta</taxon>
        <taxon>Embryophyta</taxon>
        <taxon>Tracheophyta</taxon>
        <taxon>Spermatophyta</taxon>
        <taxon>Magnoliopsida</taxon>
        <taxon>eudicotyledons</taxon>
        <taxon>Gunneridae</taxon>
        <taxon>Pentapetalae</taxon>
        <taxon>rosids</taxon>
        <taxon>malvids</taxon>
        <taxon>Brassicales</taxon>
        <taxon>Brassicaceae</taxon>
        <taxon>Camelineae</taxon>
        <taxon>Arabidopsis</taxon>
    </lineage>
</organism>